<accession>Q2L165</accession>
<evidence type="ECO:0000255" key="1">
    <source>
        <dbReference type="HAMAP-Rule" id="MF_00277"/>
    </source>
</evidence>
<evidence type="ECO:0000255" key="2">
    <source>
        <dbReference type="PROSITE-ProRule" id="PRU01175"/>
    </source>
</evidence>
<comment type="function">
    <text evidence="1">Modifies, by uridylylation and deuridylylation, the PII regulatory proteins (GlnB and homologs), in response to the nitrogen status of the cell that GlnD senses through the glutamine level. Under low glutamine levels, catalyzes the conversion of the PII proteins and UTP to PII-UMP and PPi, while under higher glutamine levels, GlnD hydrolyzes PII-UMP to PII and UMP (deuridylylation). Thus, controls uridylylation state and activity of the PII proteins, and plays an important role in the regulation of nitrogen assimilation and metabolism.</text>
</comment>
<comment type="catalytic activity">
    <reaction evidence="1">
        <text>[protein-PII]-L-tyrosine + UTP = [protein-PII]-uridylyl-L-tyrosine + diphosphate</text>
        <dbReference type="Rhea" id="RHEA:13673"/>
        <dbReference type="Rhea" id="RHEA-COMP:12147"/>
        <dbReference type="Rhea" id="RHEA-COMP:12148"/>
        <dbReference type="ChEBI" id="CHEBI:33019"/>
        <dbReference type="ChEBI" id="CHEBI:46398"/>
        <dbReference type="ChEBI" id="CHEBI:46858"/>
        <dbReference type="ChEBI" id="CHEBI:90602"/>
        <dbReference type="EC" id="2.7.7.59"/>
    </reaction>
</comment>
<comment type="catalytic activity">
    <reaction evidence="1">
        <text>[protein-PII]-uridylyl-L-tyrosine + H2O = [protein-PII]-L-tyrosine + UMP + H(+)</text>
        <dbReference type="Rhea" id="RHEA:48600"/>
        <dbReference type="Rhea" id="RHEA-COMP:12147"/>
        <dbReference type="Rhea" id="RHEA-COMP:12148"/>
        <dbReference type="ChEBI" id="CHEBI:15377"/>
        <dbReference type="ChEBI" id="CHEBI:15378"/>
        <dbReference type="ChEBI" id="CHEBI:46858"/>
        <dbReference type="ChEBI" id="CHEBI:57865"/>
        <dbReference type="ChEBI" id="CHEBI:90602"/>
    </reaction>
</comment>
<comment type="cofactor">
    <cofactor evidence="1">
        <name>Mg(2+)</name>
        <dbReference type="ChEBI" id="CHEBI:18420"/>
    </cofactor>
</comment>
<comment type="activity regulation">
    <text evidence="1">Uridylyltransferase (UTase) activity is inhibited by glutamine, while glutamine activates uridylyl-removing (UR) activity.</text>
</comment>
<comment type="domain">
    <text evidence="1">Has four distinct domains: an N-terminal nucleotidyltransferase (NT) domain responsible for UTase activity, a central HD domain that encodes UR activity, and two C-terminal ACT domains that seem to have a role in glutamine sensing.</text>
</comment>
<comment type="similarity">
    <text evidence="1">Belongs to the GlnD family.</text>
</comment>
<gene>
    <name evidence="1" type="primary">glnD</name>
    <name type="ordered locus">BAV1732</name>
</gene>
<keyword id="KW-0378">Hydrolase</keyword>
<keyword id="KW-0460">Magnesium</keyword>
<keyword id="KW-0511">Multifunctional enzyme</keyword>
<keyword id="KW-0548">Nucleotidyltransferase</keyword>
<keyword id="KW-1185">Reference proteome</keyword>
<keyword id="KW-0677">Repeat</keyword>
<keyword id="KW-0808">Transferase</keyword>
<proteinExistence type="inferred from homology"/>
<reference key="1">
    <citation type="journal article" date="2006" name="J. Bacteriol.">
        <title>Comparison of the genome sequence of the poultry pathogen Bordetella avium with those of B. bronchiseptica, B. pertussis, and B. parapertussis reveals extensive diversity in surface structures associated with host interaction.</title>
        <authorList>
            <person name="Sebaihia M."/>
            <person name="Preston A."/>
            <person name="Maskell D.J."/>
            <person name="Kuzmiak H."/>
            <person name="Connell T.D."/>
            <person name="King N.D."/>
            <person name="Orndorff P.E."/>
            <person name="Miyamoto D.M."/>
            <person name="Thomson N.R."/>
            <person name="Harris D."/>
            <person name="Goble A."/>
            <person name="Lord A."/>
            <person name="Murphy L."/>
            <person name="Quail M.A."/>
            <person name="Rutter S."/>
            <person name="Squares R."/>
            <person name="Squares S."/>
            <person name="Woodward J."/>
            <person name="Parkhill J."/>
            <person name="Temple L.M."/>
        </authorList>
    </citation>
    <scope>NUCLEOTIDE SEQUENCE [LARGE SCALE GENOMIC DNA]</scope>
    <source>
        <strain>197N</strain>
    </source>
</reference>
<feature type="chain" id="PRO_1000022326" description="Bifunctional uridylyltransferase/uridylyl-removing enzyme">
    <location>
        <begin position="1"/>
        <end position="858"/>
    </location>
</feature>
<feature type="domain" description="HD" evidence="2">
    <location>
        <begin position="437"/>
        <end position="559"/>
    </location>
</feature>
<feature type="domain" description="ACT 1" evidence="1">
    <location>
        <begin position="675"/>
        <end position="756"/>
    </location>
</feature>
<feature type="domain" description="ACT 2" evidence="1">
    <location>
        <begin position="789"/>
        <end position="858"/>
    </location>
</feature>
<feature type="region of interest" description="Uridylyltransferase">
    <location>
        <begin position="1"/>
        <end position="318"/>
    </location>
</feature>
<feature type="region of interest" description="Uridylyl-removing">
    <location>
        <begin position="319"/>
        <end position="674"/>
    </location>
</feature>
<protein>
    <recommendedName>
        <fullName evidence="1">Bifunctional uridylyltransferase/uridylyl-removing enzyme</fullName>
        <shortName evidence="1">UTase/UR</shortName>
    </recommendedName>
    <alternativeName>
        <fullName evidence="1">Bifunctional [protein-PII] modification enzyme</fullName>
    </alternativeName>
    <alternativeName>
        <fullName evidence="1">Bifunctional nitrogen sensor protein</fullName>
    </alternativeName>
    <domain>
        <recommendedName>
            <fullName evidence="1">[Protein-PII] uridylyltransferase</fullName>
            <shortName evidence="1">PII uridylyltransferase</shortName>
            <shortName evidence="1">UTase</shortName>
            <ecNumber evidence="1">2.7.7.59</ecNumber>
        </recommendedName>
    </domain>
    <domain>
        <recommendedName>
            <fullName evidence="1">[Protein-PII]-UMP uridylyl-removing enzyme</fullName>
            <shortName evidence="1">UR</shortName>
            <ecNumber evidence="1">3.1.4.-</ecNumber>
        </recommendedName>
    </domain>
</protein>
<dbReference type="EC" id="2.7.7.59" evidence="1"/>
<dbReference type="EC" id="3.1.4.-" evidence="1"/>
<dbReference type="EMBL" id="AM167904">
    <property type="protein sequence ID" value="CAJ49340.1"/>
    <property type="molecule type" value="Genomic_DNA"/>
</dbReference>
<dbReference type="RefSeq" id="WP_012417401.1">
    <property type="nucleotide sequence ID" value="NC_010645.1"/>
</dbReference>
<dbReference type="SMR" id="Q2L165"/>
<dbReference type="STRING" id="360910.BAV1732"/>
<dbReference type="GeneID" id="92935207"/>
<dbReference type="KEGG" id="bav:BAV1732"/>
<dbReference type="eggNOG" id="COG2844">
    <property type="taxonomic scope" value="Bacteria"/>
</dbReference>
<dbReference type="HOGENOM" id="CLU_012833_1_0_4"/>
<dbReference type="OrthoDB" id="9758038at2"/>
<dbReference type="Proteomes" id="UP000001977">
    <property type="component" value="Chromosome"/>
</dbReference>
<dbReference type="GO" id="GO:0008773">
    <property type="term" value="F:[protein-PII] uridylyltransferase activity"/>
    <property type="evidence" value="ECO:0007669"/>
    <property type="project" value="UniProtKB-UniRule"/>
</dbReference>
<dbReference type="GO" id="GO:0008081">
    <property type="term" value="F:phosphoric diester hydrolase activity"/>
    <property type="evidence" value="ECO:0007669"/>
    <property type="project" value="UniProtKB-UniRule"/>
</dbReference>
<dbReference type="GO" id="GO:0006808">
    <property type="term" value="P:regulation of nitrogen utilization"/>
    <property type="evidence" value="ECO:0007669"/>
    <property type="project" value="UniProtKB-UniRule"/>
</dbReference>
<dbReference type="CDD" id="cd04899">
    <property type="entry name" value="ACT_ACR-UUR-like_2"/>
    <property type="match status" value="1"/>
</dbReference>
<dbReference type="CDD" id="cd04900">
    <property type="entry name" value="ACT_UUR-like_1"/>
    <property type="match status" value="1"/>
</dbReference>
<dbReference type="CDD" id="cd00077">
    <property type="entry name" value="HDc"/>
    <property type="match status" value="1"/>
</dbReference>
<dbReference type="CDD" id="cd05401">
    <property type="entry name" value="NT_GlnE_GlnD_like"/>
    <property type="match status" value="1"/>
</dbReference>
<dbReference type="Gene3D" id="3.30.70.260">
    <property type="match status" value="1"/>
</dbReference>
<dbReference type="Gene3D" id="1.10.3210.10">
    <property type="entry name" value="Hypothetical protein af1432"/>
    <property type="match status" value="1"/>
</dbReference>
<dbReference type="HAMAP" id="MF_00277">
    <property type="entry name" value="PII_uridylyl_transf"/>
    <property type="match status" value="1"/>
</dbReference>
<dbReference type="InterPro" id="IPR045865">
    <property type="entry name" value="ACT-like_dom_sf"/>
</dbReference>
<dbReference type="InterPro" id="IPR002912">
    <property type="entry name" value="ACT_dom"/>
</dbReference>
<dbReference type="InterPro" id="IPR003607">
    <property type="entry name" value="HD/PDEase_dom"/>
</dbReference>
<dbReference type="InterPro" id="IPR006674">
    <property type="entry name" value="HD_domain"/>
</dbReference>
<dbReference type="InterPro" id="IPR043519">
    <property type="entry name" value="NT_sf"/>
</dbReference>
<dbReference type="InterPro" id="IPR013546">
    <property type="entry name" value="PII_UdlTrfase/GS_AdlTrfase"/>
</dbReference>
<dbReference type="InterPro" id="IPR002934">
    <property type="entry name" value="Polymerase_NTP_transf_dom"/>
</dbReference>
<dbReference type="InterPro" id="IPR010043">
    <property type="entry name" value="UTase/UR"/>
</dbReference>
<dbReference type="NCBIfam" id="NF002837">
    <property type="entry name" value="PRK03059.1"/>
    <property type="match status" value="1"/>
</dbReference>
<dbReference type="NCBIfam" id="TIGR01693">
    <property type="entry name" value="UTase_glnD"/>
    <property type="match status" value="1"/>
</dbReference>
<dbReference type="PANTHER" id="PTHR47320">
    <property type="entry name" value="BIFUNCTIONAL URIDYLYLTRANSFERASE/URIDYLYL-REMOVING ENZYME"/>
    <property type="match status" value="1"/>
</dbReference>
<dbReference type="PANTHER" id="PTHR47320:SF1">
    <property type="entry name" value="BIFUNCTIONAL URIDYLYLTRANSFERASE_URIDYLYL-REMOVING ENZYME"/>
    <property type="match status" value="1"/>
</dbReference>
<dbReference type="Pfam" id="PF01842">
    <property type="entry name" value="ACT"/>
    <property type="match status" value="1"/>
</dbReference>
<dbReference type="Pfam" id="PF08335">
    <property type="entry name" value="GlnD_UR_UTase"/>
    <property type="match status" value="1"/>
</dbReference>
<dbReference type="Pfam" id="PF01966">
    <property type="entry name" value="HD"/>
    <property type="match status" value="1"/>
</dbReference>
<dbReference type="Pfam" id="PF01909">
    <property type="entry name" value="NTP_transf_2"/>
    <property type="match status" value="1"/>
</dbReference>
<dbReference type="PIRSF" id="PIRSF006288">
    <property type="entry name" value="PII_uridyltransf"/>
    <property type="match status" value="1"/>
</dbReference>
<dbReference type="SMART" id="SM00471">
    <property type="entry name" value="HDc"/>
    <property type="match status" value="1"/>
</dbReference>
<dbReference type="SUPFAM" id="SSF55021">
    <property type="entry name" value="ACT-like"/>
    <property type="match status" value="2"/>
</dbReference>
<dbReference type="SUPFAM" id="SSF109604">
    <property type="entry name" value="HD-domain/PDEase-like"/>
    <property type="match status" value="1"/>
</dbReference>
<dbReference type="SUPFAM" id="SSF81301">
    <property type="entry name" value="Nucleotidyltransferase"/>
    <property type="match status" value="1"/>
</dbReference>
<dbReference type="SUPFAM" id="SSF81593">
    <property type="entry name" value="Nucleotidyltransferase substrate binding subunit/domain"/>
    <property type="match status" value="1"/>
</dbReference>
<dbReference type="PROSITE" id="PS51671">
    <property type="entry name" value="ACT"/>
    <property type="match status" value="2"/>
</dbReference>
<dbReference type="PROSITE" id="PS51831">
    <property type="entry name" value="HD"/>
    <property type="match status" value="1"/>
</dbReference>
<name>GLND_BORA1</name>
<organism>
    <name type="scientific">Bordetella avium (strain 197N)</name>
    <dbReference type="NCBI Taxonomy" id="360910"/>
    <lineage>
        <taxon>Bacteria</taxon>
        <taxon>Pseudomonadati</taxon>
        <taxon>Pseudomonadota</taxon>
        <taxon>Betaproteobacteria</taxon>
        <taxon>Burkholderiales</taxon>
        <taxon>Alcaligenaceae</taxon>
        <taxon>Bordetella</taxon>
    </lineage>
</organism>
<sequence>MNPTDLHPIKERMQAARAAAIADFRQHLRPDPLLSELRRIVDQALRDLLKLCPLPAGATLAAVGGYGRGELYPHSDVDLLILLPRAPDGPDESAIETLVASLWDLGLEPGHSVRTLAECETEASADITVETALLESRWLAGSRSLMKQFETAMTARLDARAFFRAKRVEMQQRHARYQDTPYALEPNSKESPGGLRDLQVILWMARAAGFGRNWRAVAQAGLLTAPEARDLRRAEQAFKRLRIELHLLTRRREDRLLFDLQPTLAEVYGIATTTTRRASELLMQRYYWAARLVTQLNVILIQNIEERLFPRPESDARAIDEEFRSLHGRLDIIREDCFERNPTLLLRAFLVMQQHPGLSGMSARTLRAIWHSRHRIDAQFRRNPVNRKLFLQILQQPRGIVHELRRMTMLNILPRYLPVFRRIVGQMQHDLFHVYTVDQHTLAVIRNLRRFTMPEHASEYPLASQVMAGLDRHWLLYVAALFHDIAKGRGGDHSELGARDARRFAQEHGLAPEDAELVEFLVRQHLLMSAVAQKRDLSDPEVINEFARQVKDERHLNALYLLTVADIRGTSPKVWNAWKGKLLEDLYRLTLAALGGAQDTRTVLAERKEEAARLLRLAGLRDDARDAFWQQLDVAYFLRHDASEIAWHTRHLYYQVQPDKPVVKVRPTEEGSGLQIMVYTRDTPDLFMNTCAYFDGKAFSIQDARIHTTRQGWALDSFIVLPAEPLADLRAQAALVEHELAERLRQAQGGARLADVRVFHRNRQSRVSRVFPVMPQAELHPDERSQSWRLSVTATDRPGLLHALARVMAENGVNLIMAKIMTLGDRVEDVFIISGAVLERPRTQMQFEHAVLDALAGE</sequence>